<accession>Q8E5F5</accession>
<gene>
    <name evidence="1" type="primary">carB</name>
    <name type="ordered locus">gbs1077</name>
</gene>
<dbReference type="EC" id="6.3.4.16" evidence="1"/>
<dbReference type="EC" id="6.3.5.5" evidence="1"/>
<dbReference type="EMBL" id="AL766848">
    <property type="protein sequence ID" value="CAD46736.1"/>
    <property type="molecule type" value="Genomic_DNA"/>
</dbReference>
<dbReference type="RefSeq" id="WP_001126464.1">
    <property type="nucleotide sequence ID" value="NC_004368.1"/>
</dbReference>
<dbReference type="SMR" id="Q8E5F5"/>
<dbReference type="KEGG" id="san:gbs1077"/>
<dbReference type="eggNOG" id="COG0458">
    <property type="taxonomic scope" value="Bacteria"/>
</dbReference>
<dbReference type="HOGENOM" id="CLU_000513_1_2_9"/>
<dbReference type="UniPathway" id="UPA00068">
    <property type="reaction ID" value="UER00171"/>
</dbReference>
<dbReference type="UniPathway" id="UPA00070">
    <property type="reaction ID" value="UER00115"/>
</dbReference>
<dbReference type="Proteomes" id="UP000000823">
    <property type="component" value="Chromosome"/>
</dbReference>
<dbReference type="GO" id="GO:0005737">
    <property type="term" value="C:cytoplasm"/>
    <property type="evidence" value="ECO:0007669"/>
    <property type="project" value="TreeGrafter"/>
</dbReference>
<dbReference type="GO" id="GO:0005524">
    <property type="term" value="F:ATP binding"/>
    <property type="evidence" value="ECO:0007669"/>
    <property type="project" value="UniProtKB-UniRule"/>
</dbReference>
<dbReference type="GO" id="GO:0004087">
    <property type="term" value="F:carbamoyl-phosphate synthase (ammonia) activity"/>
    <property type="evidence" value="ECO:0007669"/>
    <property type="project" value="RHEA"/>
</dbReference>
<dbReference type="GO" id="GO:0004088">
    <property type="term" value="F:carbamoyl-phosphate synthase (glutamine-hydrolyzing) activity"/>
    <property type="evidence" value="ECO:0007669"/>
    <property type="project" value="UniProtKB-UniRule"/>
</dbReference>
<dbReference type="GO" id="GO:0046872">
    <property type="term" value="F:metal ion binding"/>
    <property type="evidence" value="ECO:0007669"/>
    <property type="project" value="UniProtKB-KW"/>
</dbReference>
<dbReference type="GO" id="GO:0044205">
    <property type="term" value="P:'de novo' UMP biosynthetic process"/>
    <property type="evidence" value="ECO:0007669"/>
    <property type="project" value="UniProtKB-UniRule"/>
</dbReference>
<dbReference type="GO" id="GO:0006541">
    <property type="term" value="P:glutamine metabolic process"/>
    <property type="evidence" value="ECO:0007669"/>
    <property type="project" value="TreeGrafter"/>
</dbReference>
<dbReference type="GO" id="GO:0006526">
    <property type="term" value="P:L-arginine biosynthetic process"/>
    <property type="evidence" value="ECO:0007669"/>
    <property type="project" value="UniProtKB-UniRule"/>
</dbReference>
<dbReference type="CDD" id="cd01424">
    <property type="entry name" value="MGS_CPS_II"/>
    <property type="match status" value="1"/>
</dbReference>
<dbReference type="FunFam" id="1.10.1030.10:FF:000002">
    <property type="entry name" value="Carbamoyl-phosphate synthase large chain"/>
    <property type="match status" value="1"/>
</dbReference>
<dbReference type="FunFam" id="3.30.1490.20:FF:000001">
    <property type="entry name" value="Carbamoyl-phosphate synthase large chain"/>
    <property type="match status" value="1"/>
</dbReference>
<dbReference type="FunFam" id="3.30.470.20:FF:000001">
    <property type="entry name" value="Carbamoyl-phosphate synthase large chain"/>
    <property type="match status" value="1"/>
</dbReference>
<dbReference type="FunFam" id="3.30.470.20:FF:000026">
    <property type="entry name" value="Carbamoyl-phosphate synthase large chain"/>
    <property type="match status" value="1"/>
</dbReference>
<dbReference type="FunFam" id="3.40.50.20:FF:000001">
    <property type="entry name" value="Carbamoyl-phosphate synthase large chain"/>
    <property type="match status" value="2"/>
</dbReference>
<dbReference type="Gene3D" id="3.40.50.20">
    <property type="match status" value="2"/>
</dbReference>
<dbReference type="Gene3D" id="3.30.1490.20">
    <property type="entry name" value="ATP-grasp fold, A domain"/>
    <property type="match status" value="1"/>
</dbReference>
<dbReference type="Gene3D" id="3.30.470.20">
    <property type="entry name" value="ATP-grasp fold, B domain"/>
    <property type="match status" value="2"/>
</dbReference>
<dbReference type="Gene3D" id="1.10.1030.10">
    <property type="entry name" value="Carbamoyl-phosphate synthetase, large subunit oligomerisation domain"/>
    <property type="match status" value="1"/>
</dbReference>
<dbReference type="Gene3D" id="3.40.50.1380">
    <property type="entry name" value="Methylglyoxal synthase-like domain"/>
    <property type="match status" value="1"/>
</dbReference>
<dbReference type="HAMAP" id="MF_01210_A">
    <property type="entry name" value="CPSase_L_chain_A"/>
    <property type="match status" value="1"/>
</dbReference>
<dbReference type="HAMAP" id="MF_01210_B">
    <property type="entry name" value="CPSase_L_chain_B"/>
    <property type="match status" value="1"/>
</dbReference>
<dbReference type="InterPro" id="IPR011761">
    <property type="entry name" value="ATP-grasp"/>
</dbReference>
<dbReference type="InterPro" id="IPR013815">
    <property type="entry name" value="ATP_grasp_subdomain_1"/>
</dbReference>
<dbReference type="InterPro" id="IPR006275">
    <property type="entry name" value="CarbamoylP_synth_lsu"/>
</dbReference>
<dbReference type="InterPro" id="IPR005480">
    <property type="entry name" value="CarbamoylP_synth_lsu_oligo"/>
</dbReference>
<dbReference type="InterPro" id="IPR036897">
    <property type="entry name" value="CarbamoylP_synth_lsu_oligo_sf"/>
</dbReference>
<dbReference type="InterPro" id="IPR005479">
    <property type="entry name" value="CbamoylP_synth_lsu-like_ATP-bd"/>
</dbReference>
<dbReference type="InterPro" id="IPR005483">
    <property type="entry name" value="CbamoylP_synth_lsu_CPSase_dom"/>
</dbReference>
<dbReference type="InterPro" id="IPR011607">
    <property type="entry name" value="MGS-like_dom"/>
</dbReference>
<dbReference type="InterPro" id="IPR036914">
    <property type="entry name" value="MGS-like_dom_sf"/>
</dbReference>
<dbReference type="InterPro" id="IPR033937">
    <property type="entry name" value="MGS_CPS_CarB"/>
</dbReference>
<dbReference type="InterPro" id="IPR016185">
    <property type="entry name" value="PreATP-grasp_dom_sf"/>
</dbReference>
<dbReference type="NCBIfam" id="TIGR01369">
    <property type="entry name" value="CPSaseII_lrg"/>
    <property type="match status" value="1"/>
</dbReference>
<dbReference type="NCBIfam" id="NF003671">
    <property type="entry name" value="PRK05294.1"/>
    <property type="match status" value="1"/>
</dbReference>
<dbReference type="NCBIfam" id="NF009455">
    <property type="entry name" value="PRK12815.1"/>
    <property type="match status" value="1"/>
</dbReference>
<dbReference type="PANTHER" id="PTHR11405:SF53">
    <property type="entry name" value="CARBAMOYL-PHOSPHATE SYNTHASE [AMMONIA], MITOCHONDRIAL"/>
    <property type="match status" value="1"/>
</dbReference>
<dbReference type="PANTHER" id="PTHR11405">
    <property type="entry name" value="CARBAMOYLTRANSFERASE FAMILY MEMBER"/>
    <property type="match status" value="1"/>
</dbReference>
<dbReference type="Pfam" id="PF02786">
    <property type="entry name" value="CPSase_L_D2"/>
    <property type="match status" value="2"/>
</dbReference>
<dbReference type="Pfam" id="PF02787">
    <property type="entry name" value="CPSase_L_D3"/>
    <property type="match status" value="1"/>
</dbReference>
<dbReference type="Pfam" id="PF02142">
    <property type="entry name" value="MGS"/>
    <property type="match status" value="1"/>
</dbReference>
<dbReference type="PRINTS" id="PR00098">
    <property type="entry name" value="CPSASE"/>
</dbReference>
<dbReference type="SMART" id="SM01096">
    <property type="entry name" value="CPSase_L_D3"/>
    <property type="match status" value="1"/>
</dbReference>
<dbReference type="SMART" id="SM01209">
    <property type="entry name" value="GARS_A"/>
    <property type="match status" value="1"/>
</dbReference>
<dbReference type="SMART" id="SM00851">
    <property type="entry name" value="MGS"/>
    <property type="match status" value="1"/>
</dbReference>
<dbReference type="SUPFAM" id="SSF48108">
    <property type="entry name" value="Carbamoyl phosphate synthetase, large subunit connection domain"/>
    <property type="match status" value="1"/>
</dbReference>
<dbReference type="SUPFAM" id="SSF56059">
    <property type="entry name" value="Glutathione synthetase ATP-binding domain-like"/>
    <property type="match status" value="2"/>
</dbReference>
<dbReference type="SUPFAM" id="SSF52335">
    <property type="entry name" value="Methylglyoxal synthase-like"/>
    <property type="match status" value="1"/>
</dbReference>
<dbReference type="SUPFAM" id="SSF52440">
    <property type="entry name" value="PreATP-grasp domain"/>
    <property type="match status" value="2"/>
</dbReference>
<dbReference type="PROSITE" id="PS50975">
    <property type="entry name" value="ATP_GRASP"/>
    <property type="match status" value="2"/>
</dbReference>
<dbReference type="PROSITE" id="PS00866">
    <property type="entry name" value="CPSASE_1"/>
    <property type="match status" value="2"/>
</dbReference>
<dbReference type="PROSITE" id="PS00867">
    <property type="entry name" value="CPSASE_2"/>
    <property type="match status" value="2"/>
</dbReference>
<dbReference type="PROSITE" id="PS51855">
    <property type="entry name" value="MGS"/>
    <property type="match status" value="1"/>
</dbReference>
<keyword id="KW-0028">Amino-acid biosynthesis</keyword>
<keyword id="KW-0055">Arginine biosynthesis</keyword>
<keyword id="KW-0067">ATP-binding</keyword>
<keyword id="KW-0436">Ligase</keyword>
<keyword id="KW-0460">Magnesium</keyword>
<keyword id="KW-0464">Manganese</keyword>
<keyword id="KW-0479">Metal-binding</keyword>
<keyword id="KW-0547">Nucleotide-binding</keyword>
<keyword id="KW-0665">Pyrimidine biosynthesis</keyword>
<keyword id="KW-0677">Repeat</keyword>
<evidence type="ECO:0000255" key="1">
    <source>
        <dbReference type="HAMAP-Rule" id="MF_01210"/>
    </source>
</evidence>
<feature type="chain" id="PRO_0000145047" description="Carbamoyl phosphate synthase large chain">
    <location>
        <begin position="1"/>
        <end position="1060"/>
    </location>
</feature>
<feature type="domain" description="ATP-grasp 1" evidence="1">
    <location>
        <begin position="133"/>
        <end position="327"/>
    </location>
</feature>
<feature type="domain" description="ATP-grasp 2" evidence="1">
    <location>
        <begin position="671"/>
        <end position="861"/>
    </location>
</feature>
<feature type="domain" description="MGS-like" evidence="1">
    <location>
        <begin position="930"/>
        <end position="1060"/>
    </location>
</feature>
<feature type="region of interest" description="Carboxyphosphate synthetic domain" evidence="1">
    <location>
        <begin position="1"/>
        <end position="401"/>
    </location>
</feature>
<feature type="region of interest" description="Oligomerization domain" evidence="1">
    <location>
        <begin position="402"/>
        <end position="546"/>
    </location>
</feature>
<feature type="region of interest" description="Carbamoyl phosphate synthetic domain" evidence="1">
    <location>
        <begin position="547"/>
        <end position="929"/>
    </location>
</feature>
<feature type="region of interest" description="Allosteric domain" evidence="1">
    <location>
        <begin position="930"/>
        <end position="1060"/>
    </location>
</feature>
<feature type="binding site" evidence="1">
    <location>
        <position position="129"/>
    </location>
    <ligand>
        <name>ATP</name>
        <dbReference type="ChEBI" id="CHEBI:30616"/>
        <label>1</label>
    </ligand>
</feature>
<feature type="binding site" evidence="1">
    <location>
        <position position="169"/>
    </location>
    <ligand>
        <name>ATP</name>
        <dbReference type="ChEBI" id="CHEBI:30616"/>
        <label>1</label>
    </ligand>
</feature>
<feature type="binding site" evidence="1">
    <location>
        <position position="175"/>
    </location>
    <ligand>
        <name>ATP</name>
        <dbReference type="ChEBI" id="CHEBI:30616"/>
        <label>1</label>
    </ligand>
</feature>
<feature type="binding site" evidence="1">
    <location>
        <position position="176"/>
    </location>
    <ligand>
        <name>ATP</name>
        <dbReference type="ChEBI" id="CHEBI:30616"/>
        <label>1</label>
    </ligand>
</feature>
<feature type="binding site" evidence="1">
    <location>
        <position position="208"/>
    </location>
    <ligand>
        <name>ATP</name>
        <dbReference type="ChEBI" id="CHEBI:30616"/>
        <label>1</label>
    </ligand>
</feature>
<feature type="binding site" evidence="1">
    <location>
        <position position="210"/>
    </location>
    <ligand>
        <name>ATP</name>
        <dbReference type="ChEBI" id="CHEBI:30616"/>
        <label>1</label>
    </ligand>
</feature>
<feature type="binding site" evidence="1">
    <location>
        <position position="215"/>
    </location>
    <ligand>
        <name>ATP</name>
        <dbReference type="ChEBI" id="CHEBI:30616"/>
        <label>1</label>
    </ligand>
</feature>
<feature type="binding site" evidence="1">
    <location>
        <position position="241"/>
    </location>
    <ligand>
        <name>ATP</name>
        <dbReference type="ChEBI" id="CHEBI:30616"/>
        <label>1</label>
    </ligand>
</feature>
<feature type="binding site" evidence="1">
    <location>
        <position position="242"/>
    </location>
    <ligand>
        <name>ATP</name>
        <dbReference type="ChEBI" id="CHEBI:30616"/>
        <label>1</label>
    </ligand>
</feature>
<feature type="binding site" evidence="1">
    <location>
        <position position="243"/>
    </location>
    <ligand>
        <name>ATP</name>
        <dbReference type="ChEBI" id="CHEBI:30616"/>
        <label>1</label>
    </ligand>
</feature>
<feature type="binding site" evidence="1">
    <location>
        <position position="284"/>
    </location>
    <ligand>
        <name>ATP</name>
        <dbReference type="ChEBI" id="CHEBI:30616"/>
        <label>1</label>
    </ligand>
</feature>
<feature type="binding site" evidence="1">
    <location>
        <position position="284"/>
    </location>
    <ligand>
        <name>Mg(2+)</name>
        <dbReference type="ChEBI" id="CHEBI:18420"/>
        <label>1</label>
    </ligand>
</feature>
<feature type="binding site" evidence="1">
    <location>
        <position position="284"/>
    </location>
    <ligand>
        <name>Mn(2+)</name>
        <dbReference type="ChEBI" id="CHEBI:29035"/>
        <label>1</label>
    </ligand>
</feature>
<feature type="binding site" evidence="1">
    <location>
        <position position="298"/>
    </location>
    <ligand>
        <name>ATP</name>
        <dbReference type="ChEBI" id="CHEBI:30616"/>
        <label>1</label>
    </ligand>
</feature>
<feature type="binding site" evidence="1">
    <location>
        <position position="298"/>
    </location>
    <ligand>
        <name>Mg(2+)</name>
        <dbReference type="ChEBI" id="CHEBI:18420"/>
        <label>1</label>
    </ligand>
</feature>
<feature type="binding site" evidence="1">
    <location>
        <position position="298"/>
    </location>
    <ligand>
        <name>Mg(2+)</name>
        <dbReference type="ChEBI" id="CHEBI:18420"/>
        <label>2</label>
    </ligand>
</feature>
<feature type="binding site" evidence="1">
    <location>
        <position position="298"/>
    </location>
    <ligand>
        <name>Mn(2+)</name>
        <dbReference type="ChEBI" id="CHEBI:29035"/>
        <label>1</label>
    </ligand>
</feature>
<feature type="binding site" evidence="1">
    <location>
        <position position="298"/>
    </location>
    <ligand>
        <name>Mn(2+)</name>
        <dbReference type="ChEBI" id="CHEBI:29035"/>
        <label>2</label>
    </ligand>
</feature>
<feature type="binding site" evidence="1">
    <location>
        <position position="300"/>
    </location>
    <ligand>
        <name>Mg(2+)</name>
        <dbReference type="ChEBI" id="CHEBI:18420"/>
        <label>2</label>
    </ligand>
</feature>
<feature type="binding site" evidence="1">
    <location>
        <position position="300"/>
    </location>
    <ligand>
        <name>Mn(2+)</name>
        <dbReference type="ChEBI" id="CHEBI:29035"/>
        <label>2</label>
    </ligand>
</feature>
<feature type="binding site" evidence="1">
    <location>
        <position position="707"/>
    </location>
    <ligand>
        <name>ATP</name>
        <dbReference type="ChEBI" id="CHEBI:30616"/>
        <label>2</label>
    </ligand>
</feature>
<feature type="binding site" evidence="1">
    <location>
        <position position="746"/>
    </location>
    <ligand>
        <name>ATP</name>
        <dbReference type="ChEBI" id="CHEBI:30616"/>
        <label>2</label>
    </ligand>
</feature>
<feature type="binding site" evidence="1">
    <location>
        <position position="748"/>
    </location>
    <ligand>
        <name>ATP</name>
        <dbReference type="ChEBI" id="CHEBI:30616"/>
        <label>2</label>
    </ligand>
</feature>
<feature type="binding site" evidence="1">
    <location>
        <position position="752"/>
    </location>
    <ligand>
        <name>ATP</name>
        <dbReference type="ChEBI" id="CHEBI:30616"/>
        <label>2</label>
    </ligand>
</feature>
<feature type="binding site" evidence="1">
    <location>
        <position position="777"/>
    </location>
    <ligand>
        <name>ATP</name>
        <dbReference type="ChEBI" id="CHEBI:30616"/>
        <label>2</label>
    </ligand>
</feature>
<feature type="binding site" evidence="1">
    <location>
        <position position="778"/>
    </location>
    <ligand>
        <name>ATP</name>
        <dbReference type="ChEBI" id="CHEBI:30616"/>
        <label>2</label>
    </ligand>
</feature>
<feature type="binding site" evidence="1">
    <location>
        <position position="779"/>
    </location>
    <ligand>
        <name>ATP</name>
        <dbReference type="ChEBI" id="CHEBI:30616"/>
        <label>2</label>
    </ligand>
</feature>
<feature type="binding site" evidence="1">
    <location>
        <position position="780"/>
    </location>
    <ligand>
        <name>ATP</name>
        <dbReference type="ChEBI" id="CHEBI:30616"/>
        <label>2</label>
    </ligand>
</feature>
<feature type="binding site" evidence="1">
    <location>
        <position position="820"/>
    </location>
    <ligand>
        <name>ATP</name>
        <dbReference type="ChEBI" id="CHEBI:30616"/>
        <label>2</label>
    </ligand>
</feature>
<feature type="binding site" evidence="1">
    <location>
        <position position="820"/>
    </location>
    <ligand>
        <name>Mg(2+)</name>
        <dbReference type="ChEBI" id="CHEBI:18420"/>
        <label>3</label>
    </ligand>
</feature>
<feature type="binding site" evidence="1">
    <location>
        <position position="820"/>
    </location>
    <ligand>
        <name>Mn(2+)</name>
        <dbReference type="ChEBI" id="CHEBI:29035"/>
        <label>3</label>
    </ligand>
</feature>
<feature type="binding site" evidence="1">
    <location>
        <position position="832"/>
    </location>
    <ligand>
        <name>ATP</name>
        <dbReference type="ChEBI" id="CHEBI:30616"/>
        <label>2</label>
    </ligand>
</feature>
<feature type="binding site" evidence="1">
    <location>
        <position position="832"/>
    </location>
    <ligand>
        <name>Mg(2+)</name>
        <dbReference type="ChEBI" id="CHEBI:18420"/>
        <label>3</label>
    </ligand>
</feature>
<feature type="binding site" evidence="1">
    <location>
        <position position="832"/>
    </location>
    <ligand>
        <name>Mg(2+)</name>
        <dbReference type="ChEBI" id="CHEBI:18420"/>
        <label>4</label>
    </ligand>
</feature>
<feature type="binding site" evidence="1">
    <location>
        <position position="832"/>
    </location>
    <ligand>
        <name>Mn(2+)</name>
        <dbReference type="ChEBI" id="CHEBI:29035"/>
        <label>3</label>
    </ligand>
</feature>
<feature type="binding site" evidence="1">
    <location>
        <position position="832"/>
    </location>
    <ligand>
        <name>Mn(2+)</name>
        <dbReference type="ChEBI" id="CHEBI:29035"/>
        <label>4</label>
    </ligand>
</feature>
<feature type="binding site" evidence="1">
    <location>
        <position position="834"/>
    </location>
    <ligand>
        <name>Mg(2+)</name>
        <dbReference type="ChEBI" id="CHEBI:18420"/>
        <label>4</label>
    </ligand>
</feature>
<feature type="binding site" evidence="1">
    <location>
        <position position="834"/>
    </location>
    <ligand>
        <name>Mn(2+)</name>
        <dbReference type="ChEBI" id="CHEBI:29035"/>
        <label>4</label>
    </ligand>
</feature>
<organism>
    <name type="scientific">Streptococcus agalactiae serotype III (strain NEM316)</name>
    <dbReference type="NCBI Taxonomy" id="211110"/>
    <lineage>
        <taxon>Bacteria</taxon>
        <taxon>Bacillati</taxon>
        <taxon>Bacillota</taxon>
        <taxon>Bacilli</taxon>
        <taxon>Lactobacillales</taxon>
        <taxon>Streptococcaceae</taxon>
        <taxon>Streptococcus</taxon>
    </lineage>
</organism>
<reference key="1">
    <citation type="journal article" date="2002" name="Mol. Microbiol.">
        <title>Genome sequence of Streptococcus agalactiae, a pathogen causing invasive neonatal disease.</title>
        <authorList>
            <person name="Glaser P."/>
            <person name="Rusniok C."/>
            <person name="Buchrieser C."/>
            <person name="Chevalier F."/>
            <person name="Frangeul L."/>
            <person name="Msadek T."/>
            <person name="Zouine M."/>
            <person name="Couve E."/>
            <person name="Lalioui L."/>
            <person name="Poyart C."/>
            <person name="Trieu-Cuot P."/>
            <person name="Kunst F."/>
        </authorList>
    </citation>
    <scope>NUCLEOTIDE SEQUENCE [LARGE SCALE GENOMIC DNA]</scope>
    <source>
        <strain>NEM316</strain>
    </source>
</reference>
<sequence>MPKRTDIRKIMVIGSGPIVIGQAAEFDYSGTQACLSLKEEGYQVVLVNSNPATIMTDKDIADKVYIEPITLEFVTRILRKERPDALLPTLGGQTGLNMAMALSKNGILEELNVELLGTKLSAIDKAEDRDLFKQLMEELNQPIPESEIVNSVEEAIQFAEQIGYPLIVRPAFTLGGTGGGMCDNQEQLVDITTKGLKLSPVTQCLIERSIAGFKEIEYEVMRDAADNALVVCNMENFDPVGIHTGDSIVFAPAQTLSDVENQLLRDASLDIIRALKIEGGCNVQLALDPNSFKYYVIEVNPRVSRSSALASKATGYPIAKLAAKIAVGLTLDEVINPITKTTYAMFEPALDYVVAKMPRFPFDKFESGDRKLGTQMKATGEVMAIGRNIEESLLKACRSLEIGVDHIKIADLDNVSDDVLLEKIRKAEDDRLFYLAEALRRHYSIEKLASLTSIDSFFLDKLRVIVELEDLLSKNRLDINILKKVKNKGFSDKAIASLWQINEDQVRNMRKEAGILPVYKMVDTCASEFDSATPYFYSTYAVENESLISDKASILVLGSGPIRIGQGVEFDYATVHSVKAIRESGFEAIIMNSNPETVSTDFSISDKLYFEPLTFEDVMNVIDLEKPEGVILQFGGQTAINLAKDLNKAGVKILGTQLEDLDRAENRKQFEATLQALNIPQPPGFTATTEEEAVNAAQKIGYPVLVRPSYVLGGRAMKIVENEEDLRHYMTTAVKASPDHPVLIDAYLIGKECEVDAISDGQNILIPGIMEHIERAGVHSGDSMAVYPPQTLSETIIETIVDYTKRLAIGLNCIGMMNIQFVIKDQKVYVIEVNPRASRTLPFLSKVTHIPMAQVATKVILGDKLCNFTYGYDLYPASDMVHIKAPAFSFTKLAKVDSLLGPEMKSTGEVMGSDINLQKALYKAFEAAYLHMPDYGNIVFTVDDTDKEEALELAKVYQSIGYRIYATQGTAIYFDANGLETVLVGKLGENDRNHIPDLIKNGKIQAVINTVGQNNIDNHDALIIRRSAIEQGVPLFTSLDTAHAMFKVLESRAFTLKVLD</sequence>
<proteinExistence type="inferred from homology"/>
<comment type="function">
    <text evidence="1">Large subunit of the glutamine-dependent carbamoyl phosphate synthetase (CPSase). CPSase catalyzes the formation of carbamoyl phosphate from the ammonia moiety of glutamine, carbonate, and phosphate donated by ATP, constituting the first step of 2 biosynthetic pathways, one leading to arginine and/or urea and the other to pyrimidine nucleotides. The large subunit (synthetase) binds the substrates ammonia (free or transferred from glutamine from the small subunit), hydrogencarbonate and ATP and carries out an ATP-coupled ligase reaction, activating hydrogencarbonate by forming carboxy phosphate which reacts with ammonia to form carbamoyl phosphate.</text>
</comment>
<comment type="catalytic activity">
    <reaction evidence="1">
        <text>hydrogencarbonate + L-glutamine + 2 ATP + H2O = carbamoyl phosphate + L-glutamate + 2 ADP + phosphate + 2 H(+)</text>
        <dbReference type="Rhea" id="RHEA:18633"/>
        <dbReference type="ChEBI" id="CHEBI:15377"/>
        <dbReference type="ChEBI" id="CHEBI:15378"/>
        <dbReference type="ChEBI" id="CHEBI:17544"/>
        <dbReference type="ChEBI" id="CHEBI:29985"/>
        <dbReference type="ChEBI" id="CHEBI:30616"/>
        <dbReference type="ChEBI" id="CHEBI:43474"/>
        <dbReference type="ChEBI" id="CHEBI:58228"/>
        <dbReference type="ChEBI" id="CHEBI:58359"/>
        <dbReference type="ChEBI" id="CHEBI:456216"/>
        <dbReference type="EC" id="6.3.5.5"/>
    </reaction>
</comment>
<comment type="catalytic activity">
    <molecule>Carbamoyl phosphate synthase large chain</molecule>
    <reaction evidence="1">
        <text>hydrogencarbonate + NH4(+) + 2 ATP = carbamoyl phosphate + 2 ADP + phosphate + 2 H(+)</text>
        <dbReference type="Rhea" id="RHEA:18029"/>
        <dbReference type="ChEBI" id="CHEBI:15378"/>
        <dbReference type="ChEBI" id="CHEBI:17544"/>
        <dbReference type="ChEBI" id="CHEBI:28938"/>
        <dbReference type="ChEBI" id="CHEBI:30616"/>
        <dbReference type="ChEBI" id="CHEBI:43474"/>
        <dbReference type="ChEBI" id="CHEBI:58228"/>
        <dbReference type="ChEBI" id="CHEBI:456216"/>
        <dbReference type="EC" id="6.3.4.16"/>
    </reaction>
</comment>
<comment type="cofactor">
    <cofactor evidence="1">
        <name>Mg(2+)</name>
        <dbReference type="ChEBI" id="CHEBI:18420"/>
    </cofactor>
    <cofactor evidence="1">
        <name>Mn(2+)</name>
        <dbReference type="ChEBI" id="CHEBI:29035"/>
    </cofactor>
    <text evidence="1">Binds 4 Mg(2+) or Mn(2+) ions per subunit.</text>
</comment>
<comment type="pathway">
    <text evidence="1">Amino-acid biosynthesis; L-arginine biosynthesis; carbamoyl phosphate from bicarbonate: step 1/1.</text>
</comment>
<comment type="pathway">
    <text evidence="1">Pyrimidine metabolism; UMP biosynthesis via de novo pathway; (S)-dihydroorotate from bicarbonate: step 1/3.</text>
</comment>
<comment type="subunit">
    <text evidence="1">Composed of two chains; the small (or glutamine) chain promotes the hydrolysis of glutamine to ammonia, which is used by the large (or ammonia) chain to synthesize carbamoyl phosphate. Tetramer of heterodimers (alpha,beta)4.</text>
</comment>
<comment type="domain">
    <text evidence="1">The large subunit is composed of 2 ATP-grasp domains that are involved in binding the 2 ATP molecules needed for carbamoyl phosphate synthesis. The N-terminal ATP-grasp domain (referred to as the carboxyphosphate synthetic component) catalyzes the ATP-dependent phosphorylation of hydrogencarbonate to carboxyphosphate and the subsequent nucleophilic attack by ammonia to form a carbamate intermediate. The C-terminal ATP-grasp domain (referred to as the carbamoyl phosphate synthetic component) then catalyzes the phosphorylation of carbamate with the second ATP to form the end product carbamoyl phosphate. The reactive and unstable enzyme intermediates are sequentially channeled from one active site to the next through the interior of the protein over a distance of at least 96 A.</text>
</comment>
<comment type="similarity">
    <text evidence="1">Belongs to the CarB family.</text>
</comment>
<protein>
    <recommendedName>
        <fullName evidence="1">Carbamoyl phosphate synthase large chain</fullName>
        <ecNumber evidence="1">6.3.4.16</ecNumber>
        <ecNumber evidence="1">6.3.5.5</ecNumber>
    </recommendedName>
    <alternativeName>
        <fullName evidence="1">Carbamoyl phosphate synthetase ammonia chain</fullName>
    </alternativeName>
</protein>
<name>CARB_STRA3</name>